<evidence type="ECO:0000255" key="1"/>
<evidence type="ECO:0000255" key="2">
    <source>
        <dbReference type="PROSITE-ProRule" id="PRU00258"/>
    </source>
</evidence>
<evidence type="ECO:0000255" key="3">
    <source>
        <dbReference type="PROSITE-ProRule" id="PRU01348"/>
    </source>
</evidence>
<evidence type="ECO:0000255" key="4">
    <source>
        <dbReference type="PROSITE-ProRule" id="PRU01363"/>
    </source>
</evidence>
<evidence type="ECO:0000303" key="5">
    <source>
    </source>
</evidence>
<evidence type="ECO:0000305" key="6">
    <source>
    </source>
</evidence>
<name>PREU2_PREIS</name>
<proteinExistence type="evidence at transcript level"/>
<accession>P9WET7</accession>
<reference key="1">
    <citation type="journal article" date="2022" name="Front. Microbiol.">
        <title>Cloning and functional characterization of the polyketide synthases based on genome mining of Preussia isomera XL-1326.</title>
        <authorList>
            <person name="Liu Q."/>
            <person name="Zhang D."/>
            <person name="Xu Y."/>
            <person name="Gao S."/>
            <person name="Gong Y."/>
            <person name="Cai X."/>
            <person name="Yao M."/>
            <person name="Yang X."/>
        </authorList>
    </citation>
    <scope>NUCLEOTIDE SEQUENCE [MRNA]</scope>
    <scope>FUNCTION</scope>
    <scope>DOMAIN</scope>
    <source>
        <strain>XL-1326</strain>
    </source>
</reference>
<gene>
    <name evidence="5" type="primary">Preu2</name>
</gene>
<sequence length="2328" mass="256973">MMAVHLAVASLRRNESTIAFACGTHLNLEPNDWVSLTKMNMISPDGRSKMFDELANGYGRGEGIGVICLKRLDAAIRDGDHIECVIRETGTNQDGHTKGITAPSAEAQAALIRKTYRSAGLDPTQVGSRPSFFEAHGTGTHVGDPLEAKAIQAAFFPPGQEYSDDEVLYIGSVKTIVGHTEGTAGIAGLLRAALAVRYGSIPPNLLYTRMNAEVAQYANHLRVVTAANPWPTLPVGCPRRASVNSFGFGGSNVHVIVESYVNTAARRVTSIPSFGAREPIFTPFTFSAISERALMSLMEKYLKYLEDPKSSVSPRDLAWTMQYKRSEFPFRSAMSALTVEDLRKQLRKATDILSDESNTSHIIRASQSTQPLIMAIFTGQGAQWPGMGKDIIEQSPHACDIIARLDDSLASLPEDDRPTWKIREELAIDSSRSRMDEAALSQPLTTAVQILLVDLLDIAGVKVRTVVGHSSGEIAAAYAAGMITAEDAIRVAYYRGLHSKLAGGVAGQKGAMITTFLTPNQAVDLCNLPEFRGRIVPAAFNGPTAVTLSGDVDAVERVLLMLEAQNIFARKLNVEKAYHSHHMKACAPPYIQSLEQCGVPVMPPFMDSPIWFSSVNPGKRMDPQKALHGSYWAENLLSPVRFSDAITTAISETGVPDIFLEIGPHPALMKPVLQIISDVAKDGTVYSGLLKRSSNSILSFSNAMGSIWERFGRCAVNFSKLETTLSGGSPPVPAKDLPTYPWLHDREYWWENRWLRRRFEAAYPPNELLGEELSMGAQHETKWRSFLQPKDVPWLLDHKLNGVAVLPGAAYVAMAATAARRIYRKQTIIMIELNDLSFKLPITFPDDHTSIETVLTVVNIRSTTQQGQADFVFDFCSHQRQDELMTAARGSLTVQFGDDVNRTYPERLSQHSALTELDLDTFYNNLEGRGYNYTGPFRSITSLQRRMNFSTGRMDFTPSDMTFHPALLDGLFQATFAAENYPGDSAMLDFRVPSLVRSIKVFPARCDEMTAMMKEKVDFQVSRTGPSEYSGLLLCENGSGTAIQMDGFCTAPFRMSTPEEDVKMFSEVAWRQYVRDARSLTSICVLAAHEKEPTLACERVGFYYLRRLNETIPPEEEKQAAPHLRRLLEFARMVVCENLLGLLSHMSPEWIHDTEADIAKIIAEYSKLIDMRLVDAVGRAYPSIIRGHVSALSVLTEDGMLTQLYSEGLGFYQANSTMTRLVSTISNQYPNIHILEVGAGTGSATSGILPTTSYSSYTFTDVSPAFLATAKDKFRRYSDKMAFTTLDLDKDFEDQGFTANSFEVIVASNVLHAVTDINASLIRIRRLLRPGGYLVCTELPESYCVKTTVIMGALPGWWQGAPRGRNWSPALTEPQWDRVLKDTGFAGLDAISPLDNDLSQSYRVFVAQAVDERVVSLRDPLTHPPSRSHDSIMIIGCESLVKSQFLEQAGQILLPSFQDVIHVPRLEEITQDVTVPYSVLCLAELGKPVFQDMTAAKWSALQTLLGQATDIIWVTTGHKSPKKVEESYKSMAIGLGRVVRNELRDLRLRFVDVDDLNTLTARSVSQATLEWYMLGQWAAQGWGNQVLFPHDTELAFENGLILAPSVVHSKTKNDHYNSQQRRIVREAQPYRVPIELVYSLSTKQYDLHEAHHVPAYALEDTITMKILYTTLYALKLKKVGFLFIGMGICPDGKYALVVSEKNGSILRLPRHTVYPFTSSRKPTQRDLWITAARIIAGRVVSGCNLTGKLLVLVTDATLLTIIRDEATRQHKSVVFITSNPNFASKQALFLHHSALDVQVRQSIPSQIGLLVNLSNRLDDKNLFKRVRSVLRDTCTEIKTIDAILRTTSSRYWSPETLGEIKVDVVDEKYLMETANMPGNMSNQAEPTILSPKNVSKQAFNNPLTVLDWTVTTHIPVTIQPATAIAKFSGNKCYIIIGTSDLAQSVCELMVSNGAKYVVMASRNPTRLSGWVQDMASRGAYIDIKSVDVTDAMSVRKMFSSIRNLTNDRGTSAPPIAGLVHMGLGLKDAAFSALTFEDLQIATDVKAKGSLLLHEQLQEEKLDFFILTSSISYVAGNPGQANYSCANAFMAGLANYRRDMGLAASVVHLGHVAGVGYITRMSQARGVVMEDARKHGLLPISERDLHQIYAEAVLASPADSGRNPEIITGFPELTSDMLESSVWGKQPIFTHLVTAGTRPSTIVQPKPHLSVRERLNNQLSSTITSAPEKAESSSHDIIRNGLVERLSVLLQVDVKQIDEDISLLDMGIDSLVASEIGSWARKELRVQIPHSMIFGGASVANIVDFAVAHLDKEWLALKNGSGEGVGKGK</sequence>
<protein>
    <recommendedName>
        <fullName evidence="5">Reducing polyketide synthase Preu2</fullName>
        <ecNumber evidence="6">2.3.1.-</ecNumber>
    </recommendedName>
    <alternativeName>
        <fullName evidence="5">biosynthesis protein Preu2</fullName>
    </alternativeName>
</protein>
<organism>
    <name type="scientific">Preussia isomera</name>
    <name type="common">Coprophilous fungus</name>
    <name type="synonym">Honoratia pisana</name>
    <dbReference type="NCBI Taxonomy" id="325670"/>
    <lineage>
        <taxon>Eukaryota</taxon>
        <taxon>Fungi</taxon>
        <taxon>Dikarya</taxon>
        <taxon>Ascomycota</taxon>
        <taxon>Pezizomycotina</taxon>
        <taxon>Dothideomycetes</taxon>
        <taxon>Pleosporomycetidae</taxon>
        <taxon>Pleosporales</taxon>
        <taxon>Sporormiaceae</taxon>
        <taxon>Preussia/Sporomiella species complex</taxon>
        <taxon>Preussia</taxon>
    </lineage>
</organism>
<dbReference type="EC" id="2.3.1.-" evidence="6"/>
<dbReference type="EMBL" id="OK493436">
    <property type="protein sequence ID" value="UNY67714.1"/>
    <property type="molecule type" value="mRNA"/>
</dbReference>
<dbReference type="SMR" id="P9WET7"/>
<dbReference type="GO" id="GO:0004312">
    <property type="term" value="F:fatty acid synthase activity"/>
    <property type="evidence" value="ECO:0007669"/>
    <property type="project" value="TreeGrafter"/>
</dbReference>
<dbReference type="GO" id="GO:0008168">
    <property type="term" value="F:methyltransferase activity"/>
    <property type="evidence" value="ECO:0007669"/>
    <property type="project" value="UniProtKB-KW"/>
</dbReference>
<dbReference type="GO" id="GO:0016491">
    <property type="term" value="F:oxidoreductase activity"/>
    <property type="evidence" value="ECO:0007669"/>
    <property type="project" value="UniProtKB-KW"/>
</dbReference>
<dbReference type="GO" id="GO:0031177">
    <property type="term" value="F:phosphopantetheine binding"/>
    <property type="evidence" value="ECO:0007669"/>
    <property type="project" value="InterPro"/>
</dbReference>
<dbReference type="GO" id="GO:0006633">
    <property type="term" value="P:fatty acid biosynthetic process"/>
    <property type="evidence" value="ECO:0007669"/>
    <property type="project" value="TreeGrafter"/>
</dbReference>
<dbReference type="GO" id="GO:0032259">
    <property type="term" value="P:methylation"/>
    <property type="evidence" value="ECO:0007669"/>
    <property type="project" value="UniProtKB-KW"/>
</dbReference>
<dbReference type="GO" id="GO:0044550">
    <property type="term" value="P:secondary metabolite biosynthetic process"/>
    <property type="evidence" value="ECO:0007669"/>
    <property type="project" value="TreeGrafter"/>
</dbReference>
<dbReference type="CDD" id="cd02440">
    <property type="entry name" value="AdoMet_MTases"/>
    <property type="match status" value="1"/>
</dbReference>
<dbReference type="CDD" id="cd05274">
    <property type="entry name" value="KR_FAS_SDR_x"/>
    <property type="match status" value="1"/>
</dbReference>
<dbReference type="CDD" id="cd00833">
    <property type="entry name" value="PKS"/>
    <property type="match status" value="1"/>
</dbReference>
<dbReference type="Gene3D" id="3.30.70.3290">
    <property type="match status" value="1"/>
</dbReference>
<dbReference type="Gene3D" id="3.40.47.10">
    <property type="match status" value="1"/>
</dbReference>
<dbReference type="Gene3D" id="1.10.1200.10">
    <property type="entry name" value="ACP-like"/>
    <property type="match status" value="1"/>
</dbReference>
<dbReference type="Gene3D" id="3.40.366.10">
    <property type="entry name" value="Malonyl-Coenzyme A Acyl Carrier Protein, domain 2"/>
    <property type="match status" value="1"/>
</dbReference>
<dbReference type="Gene3D" id="3.40.50.720">
    <property type="entry name" value="NAD(P)-binding Rossmann-like Domain"/>
    <property type="match status" value="1"/>
</dbReference>
<dbReference type="Gene3D" id="3.10.129.110">
    <property type="entry name" value="Polyketide synthase dehydratase"/>
    <property type="match status" value="1"/>
</dbReference>
<dbReference type="Gene3D" id="3.40.50.150">
    <property type="entry name" value="Vaccinia Virus protein VP39"/>
    <property type="match status" value="1"/>
</dbReference>
<dbReference type="InterPro" id="IPR001227">
    <property type="entry name" value="Ac_transferase_dom_sf"/>
</dbReference>
<dbReference type="InterPro" id="IPR036736">
    <property type="entry name" value="ACP-like_sf"/>
</dbReference>
<dbReference type="InterPro" id="IPR014043">
    <property type="entry name" value="Acyl_transferase_dom"/>
</dbReference>
<dbReference type="InterPro" id="IPR016035">
    <property type="entry name" value="Acyl_Trfase/lysoPLipase"/>
</dbReference>
<dbReference type="InterPro" id="IPR014031">
    <property type="entry name" value="Ketoacyl_synth_C"/>
</dbReference>
<dbReference type="InterPro" id="IPR014030">
    <property type="entry name" value="Ketoacyl_synth_N"/>
</dbReference>
<dbReference type="InterPro" id="IPR016036">
    <property type="entry name" value="Malonyl_transacylase_ACP-bd"/>
</dbReference>
<dbReference type="InterPro" id="IPR013217">
    <property type="entry name" value="Methyltransf_12"/>
</dbReference>
<dbReference type="InterPro" id="IPR036291">
    <property type="entry name" value="NAD(P)-bd_dom_sf"/>
</dbReference>
<dbReference type="InterPro" id="IPR032821">
    <property type="entry name" value="PKS_assoc"/>
</dbReference>
<dbReference type="InterPro" id="IPR020841">
    <property type="entry name" value="PKS_Beta-ketoAc_synthase_dom"/>
</dbReference>
<dbReference type="InterPro" id="IPR042104">
    <property type="entry name" value="PKS_dehydratase_sf"/>
</dbReference>
<dbReference type="InterPro" id="IPR020807">
    <property type="entry name" value="PKS_DH"/>
</dbReference>
<dbReference type="InterPro" id="IPR049551">
    <property type="entry name" value="PKS_DH_C"/>
</dbReference>
<dbReference type="InterPro" id="IPR049552">
    <property type="entry name" value="PKS_DH_N"/>
</dbReference>
<dbReference type="InterPro" id="IPR013968">
    <property type="entry name" value="PKS_KR"/>
</dbReference>
<dbReference type="InterPro" id="IPR049900">
    <property type="entry name" value="PKS_mFAS_DH"/>
</dbReference>
<dbReference type="InterPro" id="IPR050091">
    <property type="entry name" value="PKS_NRPS_Biosynth_Enz"/>
</dbReference>
<dbReference type="InterPro" id="IPR020806">
    <property type="entry name" value="PKS_PP-bd"/>
</dbReference>
<dbReference type="InterPro" id="IPR009081">
    <property type="entry name" value="PP-bd_ACP"/>
</dbReference>
<dbReference type="InterPro" id="IPR029063">
    <property type="entry name" value="SAM-dependent_MTases_sf"/>
</dbReference>
<dbReference type="InterPro" id="IPR016039">
    <property type="entry name" value="Thiolase-like"/>
</dbReference>
<dbReference type="PANTHER" id="PTHR43775">
    <property type="entry name" value="FATTY ACID SYNTHASE"/>
    <property type="match status" value="1"/>
</dbReference>
<dbReference type="PANTHER" id="PTHR43775:SF20">
    <property type="entry name" value="HYBRID PKS-NRPS SYNTHETASE APDA"/>
    <property type="match status" value="1"/>
</dbReference>
<dbReference type="Pfam" id="PF00698">
    <property type="entry name" value="Acyl_transf_1"/>
    <property type="match status" value="1"/>
</dbReference>
<dbReference type="Pfam" id="PF16197">
    <property type="entry name" value="KAsynt_C_assoc"/>
    <property type="match status" value="1"/>
</dbReference>
<dbReference type="Pfam" id="PF00109">
    <property type="entry name" value="ketoacyl-synt"/>
    <property type="match status" value="1"/>
</dbReference>
<dbReference type="Pfam" id="PF02801">
    <property type="entry name" value="Ketoacyl-synt_C"/>
    <property type="match status" value="1"/>
</dbReference>
<dbReference type="Pfam" id="PF08659">
    <property type="entry name" value="KR"/>
    <property type="match status" value="1"/>
</dbReference>
<dbReference type="Pfam" id="PF08242">
    <property type="entry name" value="Methyltransf_12"/>
    <property type="match status" value="1"/>
</dbReference>
<dbReference type="Pfam" id="PF21089">
    <property type="entry name" value="PKS_DH_N"/>
    <property type="match status" value="1"/>
</dbReference>
<dbReference type="Pfam" id="PF00550">
    <property type="entry name" value="PP-binding"/>
    <property type="match status" value="1"/>
</dbReference>
<dbReference type="Pfam" id="PF14765">
    <property type="entry name" value="PS-DH"/>
    <property type="match status" value="1"/>
</dbReference>
<dbReference type="SMART" id="SM00827">
    <property type="entry name" value="PKS_AT"/>
    <property type="match status" value="1"/>
</dbReference>
<dbReference type="SMART" id="SM00826">
    <property type="entry name" value="PKS_DH"/>
    <property type="match status" value="1"/>
</dbReference>
<dbReference type="SMART" id="SM00822">
    <property type="entry name" value="PKS_KR"/>
    <property type="match status" value="1"/>
</dbReference>
<dbReference type="SMART" id="SM00825">
    <property type="entry name" value="PKS_KS"/>
    <property type="match status" value="1"/>
</dbReference>
<dbReference type="SMART" id="SM00823">
    <property type="entry name" value="PKS_PP"/>
    <property type="match status" value="1"/>
</dbReference>
<dbReference type="SUPFAM" id="SSF47336">
    <property type="entry name" value="ACP-like"/>
    <property type="match status" value="1"/>
</dbReference>
<dbReference type="SUPFAM" id="SSF52151">
    <property type="entry name" value="FabD/lysophospholipase-like"/>
    <property type="match status" value="1"/>
</dbReference>
<dbReference type="SUPFAM" id="SSF51735">
    <property type="entry name" value="NAD(P)-binding Rossmann-fold domains"/>
    <property type="match status" value="1"/>
</dbReference>
<dbReference type="SUPFAM" id="SSF55048">
    <property type="entry name" value="Probable ACP-binding domain of malonyl-CoA ACP transacylase"/>
    <property type="match status" value="1"/>
</dbReference>
<dbReference type="SUPFAM" id="SSF53335">
    <property type="entry name" value="S-adenosyl-L-methionine-dependent methyltransferases"/>
    <property type="match status" value="1"/>
</dbReference>
<dbReference type="SUPFAM" id="SSF53901">
    <property type="entry name" value="Thiolase-like"/>
    <property type="match status" value="1"/>
</dbReference>
<dbReference type="PROSITE" id="PS50075">
    <property type="entry name" value="CARRIER"/>
    <property type="match status" value="1"/>
</dbReference>
<dbReference type="PROSITE" id="PS00606">
    <property type="entry name" value="KS3_1"/>
    <property type="match status" value="1"/>
</dbReference>
<dbReference type="PROSITE" id="PS52004">
    <property type="entry name" value="KS3_2"/>
    <property type="match status" value="1"/>
</dbReference>
<dbReference type="PROSITE" id="PS52019">
    <property type="entry name" value="PKS_MFAS_DH"/>
    <property type="match status" value="1"/>
</dbReference>
<keyword id="KW-0012">Acyltransferase</keyword>
<keyword id="KW-0489">Methyltransferase</keyword>
<keyword id="KW-0511">Multifunctional enzyme</keyword>
<keyword id="KW-0521">NADP</keyword>
<keyword id="KW-0560">Oxidoreductase</keyword>
<keyword id="KW-0596">Phosphopantetheine</keyword>
<keyword id="KW-0597">Phosphoprotein</keyword>
<keyword id="KW-0949">S-adenosyl-L-methionine</keyword>
<keyword id="KW-0808">Transferase</keyword>
<feature type="chain" id="PRO_0000456455" description="Reducing polyketide synthase Preu2">
    <location>
        <begin position="1"/>
        <end position="2328"/>
    </location>
</feature>
<feature type="domain" description="Ketosynthase family 3 (KS3)" evidence="3 6">
    <location>
        <begin position="1"/>
        <end position="259"/>
    </location>
</feature>
<feature type="domain" description="PKS/mFAS DH" evidence="4">
    <location>
        <begin position="766"/>
        <end position="1059"/>
    </location>
</feature>
<feature type="domain" description="Carrier" evidence="2">
    <location>
        <begin position="2231"/>
        <end position="2309"/>
    </location>
</feature>
<feature type="region of interest" description="Malonyl-CoA:ACP transacylase (MAT) domain" evidence="1 6">
    <location>
        <begin position="376"/>
        <end position="696"/>
    </location>
</feature>
<feature type="region of interest" description="Dehydratase (DH) domain" evidence="1 6">
    <location>
        <begin position="766"/>
        <end position="1057"/>
    </location>
</feature>
<feature type="region of interest" description="N-terminal hotdog fold" evidence="4">
    <location>
        <begin position="766"/>
        <end position="899"/>
    </location>
</feature>
<feature type="region of interest" description="C-terminal hotdog fold" evidence="4">
    <location>
        <begin position="914"/>
        <end position="1059"/>
    </location>
</feature>
<feature type="region of interest" description="Methyltransferase (MT) domain" evidence="1 6">
    <location>
        <begin position="1198"/>
        <end position="1419"/>
    </location>
</feature>
<feature type="region of interest" description="Ketoreductase (KR)domain" evidence="1 6">
    <location>
        <begin position="1932"/>
        <end position="2111"/>
    </location>
</feature>
<feature type="active site" description="Proton acceptor; for dehydratase activity" evidence="4">
    <location>
        <position position="798"/>
    </location>
</feature>
<feature type="active site" description="Proton donor; for dehydratase activity" evidence="4">
    <location>
        <position position="969"/>
    </location>
</feature>
<feature type="modified residue" description="O-(pantetheine 4'-phosphoryl)serine" evidence="2">
    <location>
        <position position="2269"/>
    </location>
</feature>
<comment type="function">
    <text evidence="6">Reducing polyketide synthase; part of a gene cluster that mediates the biosynthesis of a yet unidentified natural product.</text>
</comment>
<comment type="cofactor">
    <cofactor evidence="2">
        <name>pantetheine 4'-phosphate</name>
        <dbReference type="ChEBI" id="CHEBI:47942"/>
    </cofactor>
</comment>
<comment type="domain">
    <text evidence="6">Multidomain protein; including a ketosynthase (KS) that catalyzes repeated decarboxylative condensation to elongate the polyketide backbone; a malonyl-CoA:ACP transacylase (MAT) that selects and transfers the extender unit malonyl-CoA; a dehydratase (DH) domain that reduces hydroxyl groups to enoyl groups; a methyltransferase (MT) domain; a ketoreductase (KR) domain that catalyzes beta-ketoreduction steps; and an acyl-carrier protein (ACP) that serves as the tether of the growing and completed polyketide via its phosphopantetheinyl arm.</text>
</comment>